<accession>Q0HNS8</accession>
<comment type="function">
    <text evidence="1">One of the primary rRNA binding proteins, it binds specifically to the 5'-end of 16S ribosomal RNA.</text>
</comment>
<comment type="subunit">
    <text evidence="1">Part of the 30S ribosomal subunit.</text>
</comment>
<comment type="similarity">
    <text evidence="1">Belongs to the universal ribosomal protein uS17 family.</text>
</comment>
<feature type="chain" id="PRO_1000055023" description="Small ribosomal subunit protein uS17">
    <location>
        <begin position="1"/>
        <end position="82"/>
    </location>
</feature>
<evidence type="ECO:0000255" key="1">
    <source>
        <dbReference type="HAMAP-Rule" id="MF_01345"/>
    </source>
</evidence>
<evidence type="ECO:0000305" key="2"/>
<proteinExistence type="inferred from homology"/>
<reference key="1">
    <citation type="submission" date="2006-08" db="EMBL/GenBank/DDBJ databases">
        <title>Complete sequence of Shewanella sp. MR-4.</title>
        <authorList>
            <consortium name="US DOE Joint Genome Institute"/>
            <person name="Copeland A."/>
            <person name="Lucas S."/>
            <person name="Lapidus A."/>
            <person name="Barry K."/>
            <person name="Detter J.C."/>
            <person name="Glavina del Rio T."/>
            <person name="Hammon N."/>
            <person name="Israni S."/>
            <person name="Dalin E."/>
            <person name="Tice H."/>
            <person name="Pitluck S."/>
            <person name="Kiss H."/>
            <person name="Brettin T."/>
            <person name="Bruce D."/>
            <person name="Han C."/>
            <person name="Tapia R."/>
            <person name="Gilna P."/>
            <person name="Schmutz J."/>
            <person name="Larimer F."/>
            <person name="Land M."/>
            <person name="Hauser L."/>
            <person name="Kyrpides N."/>
            <person name="Mikhailova N."/>
            <person name="Nealson K."/>
            <person name="Konstantinidis K."/>
            <person name="Klappenbach J."/>
            <person name="Tiedje J."/>
            <person name="Richardson P."/>
        </authorList>
    </citation>
    <scope>NUCLEOTIDE SEQUENCE [LARGE SCALE GENOMIC DNA]</scope>
    <source>
        <strain>MR-4</strain>
    </source>
</reference>
<organism>
    <name type="scientific">Shewanella sp. (strain MR-4)</name>
    <dbReference type="NCBI Taxonomy" id="60480"/>
    <lineage>
        <taxon>Bacteria</taxon>
        <taxon>Pseudomonadati</taxon>
        <taxon>Pseudomonadota</taxon>
        <taxon>Gammaproteobacteria</taxon>
        <taxon>Alteromonadales</taxon>
        <taxon>Shewanellaceae</taxon>
        <taxon>Shewanella</taxon>
    </lineage>
</organism>
<gene>
    <name evidence="1" type="primary">rpsQ</name>
    <name type="ordered locus">Shewmr4_0208</name>
</gene>
<protein>
    <recommendedName>
        <fullName evidence="1">Small ribosomal subunit protein uS17</fullName>
    </recommendedName>
    <alternativeName>
        <fullName evidence="2">30S ribosomal protein S17</fullName>
    </alternativeName>
</protein>
<sequence>MSDKIRTLQGRVTSNKMDKTITVAIERQVKHPIYGKYIKRTTKIHAHDEANQCNEGDVVAIRECRPLSKTKSWTLVEVVSKA</sequence>
<keyword id="KW-0687">Ribonucleoprotein</keyword>
<keyword id="KW-0689">Ribosomal protein</keyword>
<keyword id="KW-0694">RNA-binding</keyword>
<keyword id="KW-0699">rRNA-binding</keyword>
<name>RS17_SHESM</name>
<dbReference type="EMBL" id="CP000446">
    <property type="protein sequence ID" value="ABI37289.1"/>
    <property type="molecule type" value="Genomic_DNA"/>
</dbReference>
<dbReference type="RefSeq" id="WP_011070622.1">
    <property type="nucleotide sequence ID" value="NC_008321.1"/>
</dbReference>
<dbReference type="SMR" id="Q0HNS8"/>
<dbReference type="GeneID" id="94726195"/>
<dbReference type="KEGG" id="she:Shewmr4_0208"/>
<dbReference type="HOGENOM" id="CLU_073626_1_1_6"/>
<dbReference type="GO" id="GO:0022627">
    <property type="term" value="C:cytosolic small ribosomal subunit"/>
    <property type="evidence" value="ECO:0007669"/>
    <property type="project" value="TreeGrafter"/>
</dbReference>
<dbReference type="GO" id="GO:0019843">
    <property type="term" value="F:rRNA binding"/>
    <property type="evidence" value="ECO:0007669"/>
    <property type="project" value="UniProtKB-UniRule"/>
</dbReference>
<dbReference type="GO" id="GO:0003735">
    <property type="term" value="F:structural constituent of ribosome"/>
    <property type="evidence" value="ECO:0007669"/>
    <property type="project" value="InterPro"/>
</dbReference>
<dbReference type="GO" id="GO:0006412">
    <property type="term" value="P:translation"/>
    <property type="evidence" value="ECO:0007669"/>
    <property type="project" value="UniProtKB-UniRule"/>
</dbReference>
<dbReference type="CDD" id="cd00364">
    <property type="entry name" value="Ribosomal_uS17"/>
    <property type="match status" value="1"/>
</dbReference>
<dbReference type="FunFam" id="2.40.50.140:FF:000014">
    <property type="entry name" value="30S ribosomal protein S17"/>
    <property type="match status" value="1"/>
</dbReference>
<dbReference type="Gene3D" id="2.40.50.140">
    <property type="entry name" value="Nucleic acid-binding proteins"/>
    <property type="match status" value="1"/>
</dbReference>
<dbReference type="HAMAP" id="MF_01345_B">
    <property type="entry name" value="Ribosomal_uS17_B"/>
    <property type="match status" value="1"/>
</dbReference>
<dbReference type="InterPro" id="IPR012340">
    <property type="entry name" value="NA-bd_OB-fold"/>
</dbReference>
<dbReference type="InterPro" id="IPR000266">
    <property type="entry name" value="Ribosomal_uS17"/>
</dbReference>
<dbReference type="InterPro" id="IPR019984">
    <property type="entry name" value="Ribosomal_uS17_bact/chlr"/>
</dbReference>
<dbReference type="InterPro" id="IPR019979">
    <property type="entry name" value="Ribosomal_uS17_CS"/>
</dbReference>
<dbReference type="NCBIfam" id="NF004123">
    <property type="entry name" value="PRK05610.1"/>
    <property type="match status" value="1"/>
</dbReference>
<dbReference type="NCBIfam" id="TIGR03635">
    <property type="entry name" value="uS17_bact"/>
    <property type="match status" value="1"/>
</dbReference>
<dbReference type="PANTHER" id="PTHR10744">
    <property type="entry name" value="40S RIBOSOMAL PROTEIN S11 FAMILY MEMBER"/>
    <property type="match status" value="1"/>
</dbReference>
<dbReference type="PANTHER" id="PTHR10744:SF1">
    <property type="entry name" value="SMALL RIBOSOMAL SUBUNIT PROTEIN US17M"/>
    <property type="match status" value="1"/>
</dbReference>
<dbReference type="Pfam" id="PF00366">
    <property type="entry name" value="Ribosomal_S17"/>
    <property type="match status" value="1"/>
</dbReference>
<dbReference type="PRINTS" id="PR00973">
    <property type="entry name" value="RIBOSOMALS17"/>
</dbReference>
<dbReference type="SUPFAM" id="SSF50249">
    <property type="entry name" value="Nucleic acid-binding proteins"/>
    <property type="match status" value="1"/>
</dbReference>
<dbReference type="PROSITE" id="PS00056">
    <property type="entry name" value="RIBOSOMAL_S17"/>
    <property type="match status" value="1"/>
</dbReference>